<keyword id="KW-0233">DNA recombination</keyword>
<keyword id="KW-0238">DNA-binding</keyword>
<keyword id="KW-0804">Transcription</keyword>
<keyword id="KW-0805">Transcription regulation</keyword>
<keyword id="KW-0810">Translation regulation</keyword>
<accession>Q321K4</accession>
<evidence type="ECO:0000255" key="1">
    <source>
        <dbReference type="HAMAP-Rule" id="MF_00380"/>
    </source>
</evidence>
<evidence type="ECO:0000256" key="2">
    <source>
        <dbReference type="SAM" id="MobiDB-lite"/>
    </source>
</evidence>
<name>IHFA_SHIBS</name>
<sequence>MALTKAEMSEYLFDKLGLSKRDAKELVELFFEEIRRALENGEQVKLSGFGNFDLRDKNQRPGRNPKTGEDIPITARRVVTFRPGQKLKSRVENASPKDE</sequence>
<reference key="1">
    <citation type="journal article" date="2005" name="Nucleic Acids Res.">
        <title>Genome dynamics and diversity of Shigella species, the etiologic agents of bacillary dysentery.</title>
        <authorList>
            <person name="Yang F."/>
            <person name="Yang J."/>
            <person name="Zhang X."/>
            <person name="Chen L."/>
            <person name="Jiang Y."/>
            <person name="Yan Y."/>
            <person name="Tang X."/>
            <person name="Wang J."/>
            <person name="Xiong Z."/>
            <person name="Dong J."/>
            <person name="Xue Y."/>
            <person name="Zhu Y."/>
            <person name="Xu X."/>
            <person name="Sun L."/>
            <person name="Chen S."/>
            <person name="Nie H."/>
            <person name="Peng J."/>
            <person name="Xu J."/>
            <person name="Wang Y."/>
            <person name="Yuan Z."/>
            <person name="Wen Y."/>
            <person name="Yao Z."/>
            <person name="Shen Y."/>
            <person name="Qiang B."/>
            <person name="Hou Y."/>
            <person name="Yu J."/>
            <person name="Jin Q."/>
        </authorList>
    </citation>
    <scope>NUCLEOTIDE SEQUENCE [LARGE SCALE GENOMIC DNA]</scope>
    <source>
        <strain>Sb227</strain>
    </source>
</reference>
<proteinExistence type="inferred from homology"/>
<dbReference type="EMBL" id="CP000036">
    <property type="protein sequence ID" value="ABB66004.1"/>
    <property type="molecule type" value="Genomic_DNA"/>
</dbReference>
<dbReference type="RefSeq" id="WP_001229265.1">
    <property type="nucleotide sequence ID" value="NC_007613.1"/>
</dbReference>
<dbReference type="SMR" id="Q321K4"/>
<dbReference type="GeneID" id="93775925"/>
<dbReference type="KEGG" id="sbo:SBO_1381"/>
<dbReference type="HOGENOM" id="CLU_105066_1_3_6"/>
<dbReference type="Proteomes" id="UP000007067">
    <property type="component" value="Chromosome"/>
</dbReference>
<dbReference type="GO" id="GO:0005829">
    <property type="term" value="C:cytosol"/>
    <property type="evidence" value="ECO:0007669"/>
    <property type="project" value="TreeGrafter"/>
</dbReference>
<dbReference type="GO" id="GO:0003677">
    <property type="term" value="F:DNA binding"/>
    <property type="evidence" value="ECO:0007669"/>
    <property type="project" value="UniProtKB-UniRule"/>
</dbReference>
<dbReference type="GO" id="GO:0030527">
    <property type="term" value="F:structural constituent of chromatin"/>
    <property type="evidence" value="ECO:0007669"/>
    <property type="project" value="InterPro"/>
</dbReference>
<dbReference type="GO" id="GO:0006310">
    <property type="term" value="P:DNA recombination"/>
    <property type="evidence" value="ECO:0007669"/>
    <property type="project" value="UniProtKB-UniRule"/>
</dbReference>
<dbReference type="GO" id="GO:0009893">
    <property type="term" value="P:positive regulation of metabolic process"/>
    <property type="evidence" value="ECO:0007669"/>
    <property type="project" value="UniProtKB-ARBA"/>
</dbReference>
<dbReference type="GO" id="GO:0006355">
    <property type="term" value="P:regulation of DNA-templated transcription"/>
    <property type="evidence" value="ECO:0007669"/>
    <property type="project" value="UniProtKB-UniRule"/>
</dbReference>
<dbReference type="GO" id="GO:0006417">
    <property type="term" value="P:regulation of translation"/>
    <property type="evidence" value="ECO:0007669"/>
    <property type="project" value="UniProtKB-UniRule"/>
</dbReference>
<dbReference type="CDD" id="cd13835">
    <property type="entry name" value="IHF_A"/>
    <property type="match status" value="1"/>
</dbReference>
<dbReference type="FunFam" id="4.10.520.10:FF:000002">
    <property type="entry name" value="Integration host factor subunit alpha"/>
    <property type="match status" value="1"/>
</dbReference>
<dbReference type="Gene3D" id="4.10.520.10">
    <property type="entry name" value="IHF-like DNA-binding proteins"/>
    <property type="match status" value="1"/>
</dbReference>
<dbReference type="HAMAP" id="MF_00380">
    <property type="entry name" value="IHF_alpha"/>
    <property type="match status" value="1"/>
</dbReference>
<dbReference type="InterPro" id="IPR000119">
    <property type="entry name" value="Hist_DNA-bd"/>
</dbReference>
<dbReference type="InterPro" id="IPR020816">
    <property type="entry name" value="Histone-like_DNA-bd_CS"/>
</dbReference>
<dbReference type="InterPro" id="IPR010992">
    <property type="entry name" value="IHF-like_DNA-bd_dom_sf"/>
</dbReference>
<dbReference type="InterPro" id="IPR005684">
    <property type="entry name" value="IHF_alpha"/>
</dbReference>
<dbReference type="NCBIfam" id="TIGR00987">
    <property type="entry name" value="himA"/>
    <property type="match status" value="1"/>
</dbReference>
<dbReference type="NCBIfam" id="NF001401">
    <property type="entry name" value="PRK00285.1"/>
    <property type="match status" value="1"/>
</dbReference>
<dbReference type="PANTHER" id="PTHR33175">
    <property type="entry name" value="DNA-BINDING PROTEIN HU"/>
    <property type="match status" value="1"/>
</dbReference>
<dbReference type="PANTHER" id="PTHR33175:SF2">
    <property type="entry name" value="INTEGRATION HOST FACTOR SUBUNIT ALPHA"/>
    <property type="match status" value="1"/>
</dbReference>
<dbReference type="Pfam" id="PF00216">
    <property type="entry name" value="Bac_DNA_binding"/>
    <property type="match status" value="1"/>
</dbReference>
<dbReference type="PRINTS" id="PR01727">
    <property type="entry name" value="DNABINDINGHU"/>
</dbReference>
<dbReference type="SMART" id="SM00411">
    <property type="entry name" value="BHL"/>
    <property type="match status" value="1"/>
</dbReference>
<dbReference type="SUPFAM" id="SSF47729">
    <property type="entry name" value="IHF-like DNA-binding proteins"/>
    <property type="match status" value="1"/>
</dbReference>
<dbReference type="PROSITE" id="PS00045">
    <property type="entry name" value="HISTONE_LIKE"/>
    <property type="match status" value="1"/>
</dbReference>
<feature type="chain" id="PRO_0000277778" description="Integration host factor subunit alpha">
    <location>
        <begin position="1"/>
        <end position="99"/>
    </location>
</feature>
<feature type="region of interest" description="Disordered" evidence="2">
    <location>
        <begin position="49"/>
        <end position="73"/>
    </location>
</feature>
<organism>
    <name type="scientific">Shigella boydii serotype 4 (strain Sb227)</name>
    <dbReference type="NCBI Taxonomy" id="300268"/>
    <lineage>
        <taxon>Bacteria</taxon>
        <taxon>Pseudomonadati</taxon>
        <taxon>Pseudomonadota</taxon>
        <taxon>Gammaproteobacteria</taxon>
        <taxon>Enterobacterales</taxon>
        <taxon>Enterobacteriaceae</taxon>
        <taxon>Shigella</taxon>
    </lineage>
</organism>
<gene>
    <name evidence="1" type="primary">ihfA</name>
    <name evidence="1" type="synonym">himA</name>
    <name type="ordered locus">SBO_1381</name>
</gene>
<comment type="function">
    <text evidence="1">This protein is one of the two subunits of integration host factor, a specific DNA-binding protein that functions in genetic recombination as well as in transcriptional and translational control.</text>
</comment>
<comment type="subunit">
    <text evidence="1">Heterodimer of an alpha and a beta chain.</text>
</comment>
<comment type="similarity">
    <text evidence="1">Belongs to the bacterial histone-like protein family.</text>
</comment>
<protein>
    <recommendedName>
        <fullName evidence="1">Integration host factor subunit alpha</fullName>
        <shortName evidence="1">IHF-alpha</shortName>
    </recommendedName>
</protein>